<dbReference type="EMBL" id="X65276">
    <property type="protein sequence ID" value="CAA46374.1"/>
    <property type="molecule type" value="Genomic_DNA"/>
</dbReference>
<dbReference type="EMBL" id="AE001437">
    <property type="protein sequence ID" value="AAK81634.1"/>
    <property type="molecule type" value="Genomic_DNA"/>
</dbReference>
<dbReference type="PIR" id="A40592">
    <property type="entry name" value="A40592"/>
</dbReference>
<dbReference type="PIR" id="G97355">
    <property type="entry name" value="G97355"/>
</dbReference>
<dbReference type="RefSeq" id="NP_350294.1">
    <property type="nucleotide sequence ID" value="NC_003030.1"/>
</dbReference>
<dbReference type="RefSeq" id="WP_010966974.1">
    <property type="nucleotide sequence ID" value="NC_003030.1"/>
</dbReference>
<dbReference type="SMR" id="Q03928"/>
<dbReference type="STRING" id="272562.CA_C3714"/>
<dbReference type="GeneID" id="45000210"/>
<dbReference type="KEGG" id="cac:CA_C3714"/>
<dbReference type="PATRIC" id="fig|272562.8.peg.3903"/>
<dbReference type="eggNOG" id="COG0071">
    <property type="taxonomic scope" value="Bacteria"/>
</dbReference>
<dbReference type="HOGENOM" id="CLU_046737_8_3_9"/>
<dbReference type="OrthoDB" id="9811615at2"/>
<dbReference type="Proteomes" id="UP000000814">
    <property type="component" value="Chromosome"/>
</dbReference>
<dbReference type="CDD" id="cd06471">
    <property type="entry name" value="ACD_LpsHSP_like"/>
    <property type="match status" value="1"/>
</dbReference>
<dbReference type="Gene3D" id="2.60.40.790">
    <property type="match status" value="1"/>
</dbReference>
<dbReference type="InterPro" id="IPR002068">
    <property type="entry name" value="A-crystallin/Hsp20_dom"/>
</dbReference>
<dbReference type="InterPro" id="IPR008978">
    <property type="entry name" value="HSP20-like_chaperone"/>
</dbReference>
<dbReference type="InterPro" id="IPR053570">
    <property type="entry name" value="sHSP/HSP20"/>
</dbReference>
<dbReference type="InterPro" id="IPR031107">
    <property type="entry name" value="Small_HSP"/>
</dbReference>
<dbReference type="NCBIfam" id="NF042420">
    <property type="entry name" value="Hsp18_Clos"/>
    <property type="match status" value="1"/>
</dbReference>
<dbReference type="PANTHER" id="PTHR11527">
    <property type="entry name" value="HEAT-SHOCK PROTEIN 20 FAMILY MEMBER"/>
    <property type="match status" value="1"/>
</dbReference>
<dbReference type="Pfam" id="PF00011">
    <property type="entry name" value="HSP20"/>
    <property type="match status" value="1"/>
</dbReference>
<dbReference type="SUPFAM" id="SSF49764">
    <property type="entry name" value="HSP20-like chaperones"/>
    <property type="match status" value="1"/>
</dbReference>
<dbReference type="PROSITE" id="PS01031">
    <property type="entry name" value="SHSP"/>
    <property type="match status" value="1"/>
</dbReference>
<evidence type="ECO:0000255" key="1">
    <source>
        <dbReference type="PROSITE-ProRule" id="PRU00285"/>
    </source>
</evidence>
<protein>
    <recommendedName>
        <fullName>18 kDa heat shock protein</fullName>
    </recommendedName>
    <alternativeName>
        <fullName>HSP 18</fullName>
    </alternativeName>
</protein>
<comment type="function">
    <text>Probable chaperone.</text>
</comment>
<comment type="induction">
    <text>By stress; by heat shock and also at the onset of solventogenesis.</text>
</comment>
<comment type="similarity">
    <text evidence="1">Belongs to the small heat shock protein (HSP20) family.</text>
</comment>
<proteinExistence type="evidence at transcript level"/>
<keyword id="KW-0143">Chaperone</keyword>
<keyword id="KW-1185">Reference proteome</keyword>
<keyword id="KW-0346">Stress response</keyword>
<name>HSP18_CLOAB</name>
<accession>Q03928</accession>
<feature type="chain" id="PRO_0000126050" description="18 kDa heat shock protein">
    <location>
        <begin position="1"/>
        <end position="151"/>
    </location>
</feature>
<feature type="domain" description="sHSP" evidence="1">
    <location>
        <begin position="38"/>
        <end position="151"/>
    </location>
</feature>
<organism>
    <name type="scientific">Clostridium acetobutylicum (strain ATCC 824 / DSM 792 / JCM 1419 / IAM 19013 / LMG 5710 / NBRC 13948 / NRRL B-527 / VKM B-1787 / 2291 / W)</name>
    <dbReference type="NCBI Taxonomy" id="272562"/>
    <lineage>
        <taxon>Bacteria</taxon>
        <taxon>Bacillati</taxon>
        <taxon>Bacillota</taxon>
        <taxon>Clostridia</taxon>
        <taxon>Eubacteriales</taxon>
        <taxon>Clostridiaceae</taxon>
        <taxon>Clostridium</taxon>
    </lineage>
</organism>
<sequence>MFGMVPFRRNNNGLMRREDFFDKMFDNFFSDDFFPTTTFNGNAGFKVDIKEDDDKYTVAADLPGVKKDNIELQYENNYLTINAKRDDIVETKDDNNNFVRRERSYGELRRSFYVDNIDDSKIDASFLDGVLRITLPKKVKGKDNGRRIDIH</sequence>
<reference key="1">
    <citation type="journal article" date="1993" name="J. Bacteriol.">
        <title>Sequence and molecular characterization of a DNA region encoding a small heat shock protein of Clostridium acetobutylicum.</title>
        <authorList>
            <person name="Sauer U."/>
            <person name="Duerre P."/>
        </authorList>
    </citation>
    <scope>NUCLEOTIDE SEQUENCE [GENOMIC DNA]</scope>
    <source>
        <strain>ATCC 824 / DSM 792 / JCM 1419 / IAM 19013 / LMG 5710 / NBRC 13948 / NRRL B-527 / VKM B-1787 / 2291 / W</strain>
    </source>
</reference>
<reference key="2">
    <citation type="journal article" date="2001" name="J. Bacteriol.">
        <title>Genome sequence and comparative analysis of the solvent-producing bacterium Clostridium acetobutylicum.</title>
        <authorList>
            <person name="Noelling J."/>
            <person name="Breton G."/>
            <person name="Omelchenko M.V."/>
            <person name="Makarova K.S."/>
            <person name="Zeng Q."/>
            <person name="Gibson R."/>
            <person name="Lee H.M."/>
            <person name="Dubois J."/>
            <person name="Qiu D."/>
            <person name="Hitti J."/>
            <person name="Wolf Y.I."/>
            <person name="Tatusov R.L."/>
            <person name="Sabathe F."/>
            <person name="Doucette-Stamm L.A."/>
            <person name="Soucaille P."/>
            <person name="Daly M.J."/>
            <person name="Bennett G.N."/>
            <person name="Koonin E.V."/>
            <person name="Smith D.R."/>
        </authorList>
    </citation>
    <scope>NUCLEOTIDE SEQUENCE [LARGE SCALE GENOMIC DNA]</scope>
    <source>
        <strain>ATCC 824 / DSM 792 / JCM 1419 / IAM 19013 / LMG 5710 / NBRC 13948 / NRRL B-527 / VKM B-1787 / 2291 / W</strain>
    </source>
</reference>
<gene>
    <name type="primary">hsp18</name>
    <name type="ordered locus">CA_C3714</name>
</gene>